<reference key="1">
    <citation type="submission" date="2008-02" db="EMBL/GenBank/DDBJ databases">
        <title>Complete sequence of Shewanella woodyi ATCC 51908.</title>
        <authorList>
            <consortium name="US DOE Joint Genome Institute"/>
            <person name="Copeland A."/>
            <person name="Lucas S."/>
            <person name="Lapidus A."/>
            <person name="Glavina del Rio T."/>
            <person name="Dalin E."/>
            <person name="Tice H."/>
            <person name="Bruce D."/>
            <person name="Goodwin L."/>
            <person name="Pitluck S."/>
            <person name="Sims D."/>
            <person name="Brettin T."/>
            <person name="Detter J.C."/>
            <person name="Han C."/>
            <person name="Kuske C.R."/>
            <person name="Schmutz J."/>
            <person name="Larimer F."/>
            <person name="Land M."/>
            <person name="Hauser L."/>
            <person name="Kyrpides N."/>
            <person name="Lykidis A."/>
            <person name="Zhao J.-S."/>
            <person name="Richardson P."/>
        </authorList>
    </citation>
    <scope>NUCLEOTIDE SEQUENCE [LARGE SCALE GENOMIC DNA]</scope>
    <source>
        <strain>ATCC 51908 / MS32</strain>
    </source>
</reference>
<evidence type="ECO:0000255" key="1">
    <source>
        <dbReference type="HAMAP-Rule" id="MF_00451"/>
    </source>
</evidence>
<gene>
    <name evidence="1" type="primary">ndk</name>
    <name type="ordered locus">Swoo_1783</name>
</gene>
<dbReference type="EC" id="2.7.4.6" evidence="1"/>
<dbReference type="EMBL" id="CP000961">
    <property type="protein sequence ID" value="ACA86067.1"/>
    <property type="molecule type" value="Genomic_DNA"/>
</dbReference>
<dbReference type="RefSeq" id="WP_012324413.1">
    <property type="nucleotide sequence ID" value="NC_010506.1"/>
</dbReference>
<dbReference type="SMR" id="B1KNJ0"/>
<dbReference type="STRING" id="392500.Swoo_1783"/>
<dbReference type="KEGG" id="swd:Swoo_1783"/>
<dbReference type="eggNOG" id="COG0105">
    <property type="taxonomic scope" value="Bacteria"/>
</dbReference>
<dbReference type="HOGENOM" id="CLU_060216_8_1_6"/>
<dbReference type="Proteomes" id="UP000002168">
    <property type="component" value="Chromosome"/>
</dbReference>
<dbReference type="GO" id="GO:0005737">
    <property type="term" value="C:cytoplasm"/>
    <property type="evidence" value="ECO:0007669"/>
    <property type="project" value="UniProtKB-SubCell"/>
</dbReference>
<dbReference type="GO" id="GO:0005524">
    <property type="term" value="F:ATP binding"/>
    <property type="evidence" value="ECO:0007669"/>
    <property type="project" value="UniProtKB-UniRule"/>
</dbReference>
<dbReference type="GO" id="GO:0046872">
    <property type="term" value="F:metal ion binding"/>
    <property type="evidence" value="ECO:0007669"/>
    <property type="project" value="UniProtKB-KW"/>
</dbReference>
<dbReference type="GO" id="GO:0004550">
    <property type="term" value="F:nucleoside diphosphate kinase activity"/>
    <property type="evidence" value="ECO:0007669"/>
    <property type="project" value="UniProtKB-UniRule"/>
</dbReference>
<dbReference type="GO" id="GO:0006241">
    <property type="term" value="P:CTP biosynthetic process"/>
    <property type="evidence" value="ECO:0007669"/>
    <property type="project" value="UniProtKB-UniRule"/>
</dbReference>
<dbReference type="GO" id="GO:0006183">
    <property type="term" value="P:GTP biosynthetic process"/>
    <property type="evidence" value="ECO:0007669"/>
    <property type="project" value="UniProtKB-UniRule"/>
</dbReference>
<dbReference type="GO" id="GO:0006228">
    <property type="term" value="P:UTP biosynthetic process"/>
    <property type="evidence" value="ECO:0007669"/>
    <property type="project" value="UniProtKB-UniRule"/>
</dbReference>
<dbReference type="CDD" id="cd04413">
    <property type="entry name" value="NDPk_I"/>
    <property type="match status" value="1"/>
</dbReference>
<dbReference type="FunFam" id="3.30.70.141:FF:000001">
    <property type="entry name" value="Nucleoside diphosphate kinase"/>
    <property type="match status" value="1"/>
</dbReference>
<dbReference type="Gene3D" id="3.30.70.141">
    <property type="entry name" value="Nucleoside diphosphate kinase-like domain"/>
    <property type="match status" value="1"/>
</dbReference>
<dbReference type="HAMAP" id="MF_00451">
    <property type="entry name" value="NDP_kinase"/>
    <property type="match status" value="1"/>
</dbReference>
<dbReference type="InterPro" id="IPR034907">
    <property type="entry name" value="NDK-like_dom"/>
</dbReference>
<dbReference type="InterPro" id="IPR036850">
    <property type="entry name" value="NDK-like_dom_sf"/>
</dbReference>
<dbReference type="InterPro" id="IPR001564">
    <property type="entry name" value="Nucleoside_diP_kinase"/>
</dbReference>
<dbReference type="InterPro" id="IPR023005">
    <property type="entry name" value="Nucleoside_diP_kinase_AS"/>
</dbReference>
<dbReference type="NCBIfam" id="NF001908">
    <property type="entry name" value="PRK00668.1"/>
    <property type="match status" value="1"/>
</dbReference>
<dbReference type="PANTHER" id="PTHR46161">
    <property type="entry name" value="NUCLEOSIDE DIPHOSPHATE KINASE"/>
    <property type="match status" value="1"/>
</dbReference>
<dbReference type="PANTHER" id="PTHR46161:SF3">
    <property type="entry name" value="NUCLEOSIDE DIPHOSPHATE KINASE DDB_G0292928-RELATED"/>
    <property type="match status" value="1"/>
</dbReference>
<dbReference type="Pfam" id="PF00334">
    <property type="entry name" value="NDK"/>
    <property type="match status" value="1"/>
</dbReference>
<dbReference type="PRINTS" id="PR01243">
    <property type="entry name" value="NUCDPKINASE"/>
</dbReference>
<dbReference type="SMART" id="SM00562">
    <property type="entry name" value="NDK"/>
    <property type="match status" value="1"/>
</dbReference>
<dbReference type="SUPFAM" id="SSF54919">
    <property type="entry name" value="Nucleoside diphosphate kinase, NDK"/>
    <property type="match status" value="1"/>
</dbReference>
<dbReference type="PROSITE" id="PS00469">
    <property type="entry name" value="NDPK"/>
    <property type="match status" value="1"/>
</dbReference>
<dbReference type="PROSITE" id="PS51374">
    <property type="entry name" value="NDPK_LIKE"/>
    <property type="match status" value="1"/>
</dbReference>
<protein>
    <recommendedName>
        <fullName evidence="1">Nucleoside diphosphate kinase</fullName>
        <shortName evidence="1">NDK</shortName>
        <shortName evidence="1">NDP kinase</shortName>
        <ecNumber evidence="1">2.7.4.6</ecNumber>
    </recommendedName>
    <alternativeName>
        <fullName evidence="1">Nucleoside-2-P kinase</fullName>
    </alternativeName>
</protein>
<keyword id="KW-0067">ATP-binding</keyword>
<keyword id="KW-0963">Cytoplasm</keyword>
<keyword id="KW-0418">Kinase</keyword>
<keyword id="KW-0460">Magnesium</keyword>
<keyword id="KW-0479">Metal-binding</keyword>
<keyword id="KW-0546">Nucleotide metabolism</keyword>
<keyword id="KW-0547">Nucleotide-binding</keyword>
<keyword id="KW-0597">Phosphoprotein</keyword>
<keyword id="KW-1185">Reference proteome</keyword>
<keyword id="KW-0808">Transferase</keyword>
<name>NDK_SHEWM</name>
<organism>
    <name type="scientific">Shewanella woodyi (strain ATCC 51908 / MS32)</name>
    <dbReference type="NCBI Taxonomy" id="392500"/>
    <lineage>
        <taxon>Bacteria</taxon>
        <taxon>Pseudomonadati</taxon>
        <taxon>Pseudomonadota</taxon>
        <taxon>Gammaproteobacteria</taxon>
        <taxon>Alteromonadales</taxon>
        <taxon>Shewanellaceae</taxon>
        <taxon>Shewanella</taxon>
    </lineage>
</organism>
<comment type="function">
    <text evidence="1">Major role in the synthesis of nucleoside triphosphates other than ATP. The ATP gamma phosphate is transferred to the NDP beta phosphate via a ping-pong mechanism, using a phosphorylated active-site intermediate.</text>
</comment>
<comment type="catalytic activity">
    <reaction evidence="1">
        <text>a 2'-deoxyribonucleoside 5'-diphosphate + ATP = a 2'-deoxyribonucleoside 5'-triphosphate + ADP</text>
        <dbReference type="Rhea" id="RHEA:44640"/>
        <dbReference type="ChEBI" id="CHEBI:30616"/>
        <dbReference type="ChEBI" id="CHEBI:61560"/>
        <dbReference type="ChEBI" id="CHEBI:73316"/>
        <dbReference type="ChEBI" id="CHEBI:456216"/>
        <dbReference type="EC" id="2.7.4.6"/>
    </reaction>
</comment>
<comment type="catalytic activity">
    <reaction evidence="1">
        <text>a ribonucleoside 5'-diphosphate + ATP = a ribonucleoside 5'-triphosphate + ADP</text>
        <dbReference type="Rhea" id="RHEA:18113"/>
        <dbReference type="ChEBI" id="CHEBI:30616"/>
        <dbReference type="ChEBI" id="CHEBI:57930"/>
        <dbReference type="ChEBI" id="CHEBI:61557"/>
        <dbReference type="ChEBI" id="CHEBI:456216"/>
        <dbReference type="EC" id="2.7.4.6"/>
    </reaction>
</comment>
<comment type="cofactor">
    <cofactor evidence="1">
        <name>Mg(2+)</name>
        <dbReference type="ChEBI" id="CHEBI:18420"/>
    </cofactor>
</comment>
<comment type="subunit">
    <text evidence="1">Homotetramer.</text>
</comment>
<comment type="subcellular location">
    <subcellularLocation>
        <location evidence="1">Cytoplasm</location>
    </subcellularLocation>
</comment>
<comment type="similarity">
    <text evidence="1">Belongs to the NDK family.</text>
</comment>
<proteinExistence type="inferred from homology"/>
<feature type="chain" id="PRO_1000125018" description="Nucleoside diphosphate kinase">
    <location>
        <begin position="1"/>
        <end position="143"/>
    </location>
</feature>
<feature type="active site" description="Pros-phosphohistidine intermediate" evidence="1">
    <location>
        <position position="117"/>
    </location>
</feature>
<feature type="binding site" evidence="1">
    <location>
        <position position="11"/>
    </location>
    <ligand>
        <name>ATP</name>
        <dbReference type="ChEBI" id="CHEBI:30616"/>
    </ligand>
</feature>
<feature type="binding site" evidence="1">
    <location>
        <position position="59"/>
    </location>
    <ligand>
        <name>ATP</name>
        <dbReference type="ChEBI" id="CHEBI:30616"/>
    </ligand>
</feature>
<feature type="binding site" evidence="1">
    <location>
        <position position="87"/>
    </location>
    <ligand>
        <name>ATP</name>
        <dbReference type="ChEBI" id="CHEBI:30616"/>
    </ligand>
</feature>
<feature type="binding site" evidence="1">
    <location>
        <position position="93"/>
    </location>
    <ligand>
        <name>ATP</name>
        <dbReference type="ChEBI" id="CHEBI:30616"/>
    </ligand>
</feature>
<feature type="binding site" evidence="1">
    <location>
        <position position="104"/>
    </location>
    <ligand>
        <name>ATP</name>
        <dbReference type="ChEBI" id="CHEBI:30616"/>
    </ligand>
</feature>
<feature type="binding site" evidence="1">
    <location>
        <position position="114"/>
    </location>
    <ligand>
        <name>ATP</name>
        <dbReference type="ChEBI" id="CHEBI:30616"/>
    </ligand>
</feature>
<sequence>MAIERTFSIIKPDAVAKNNIGAIYNRFETAGLKIIASKMVHLSKEQAEGFYAEHSERPFFGALVAFMTSGPIMVQTLEGENAVLAHRDILGATNPAEAAPGTIRADFAESIDENAAHGSDSVASAEREVAYFFSAEELCPRTR</sequence>
<accession>B1KNJ0</accession>